<keyword id="KW-0002">3D-structure</keyword>
<keyword id="KW-0349">Heme</keyword>
<keyword id="KW-0408">Iron</keyword>
<keyword id="KW-0479">Metal-binding</keyword>
<keyword id="KW-0561">Oxygen transport</keyword>
<keyword id="KW-1185">Reference proteome</keyword>
<keyword id="KW-0813">Transport</keyword>
<reference key="1">
    <citation type="journal article" date="1996" name="DNA Res.">
        <title>Sequence analysis of the genome of the unicellular cyanobacterium Synechocystis sp. strain PCC6803. II. Sequence determination of the entire genome and assignment of potential protein-coding regions.</title>
        <authorList>
            <person name="Kaneko T."/>
            <person name="Sato S."/>
            <person name="Kotani H."/>
            <person name="Tanaka A."/>
            <person name="Asamizu E."/>
            <person name="Nakamura Y."/>
            <person name="Miyajima N."/>
            <person name="Hirosawa M."/>
            <person name="Sugiura M."/>
            <person name="Sasamoto S."/>
            <person name="Kimura T."/>
            <person name="Hosouchi T."/>
            <person name="Matsuno A."/>
            <person name="Muraki A."/>
            <person name="Nakazaki N."/>
            <person name="Naruo K."/>
            <person name="Okumura S."/>
            <person name="Shimpo S."/>
            <person name="Takeuchi C."/>
            <person name="Wada T."/>
            <person name="Watanabe A."/>
            <person name="Yamada M."/>
            <person name="Yasuda M."/>
            <person name="Tabata S."/>
        </authorList>
    </citation>
    <scope>NUCLEOTIDE SEQUENCE [LARGE SCALE GENOMIC DNA]</scope>
    <source>
        <strain>ATCC 27184 / PCC 6803 / Kazusa</strain>
    </source>
</reference>
<reference key="2">
    <citation type="journal article" date="2000" name="Eur. J. Biochem.">
        <title>Structural investigations of the hemoglobin of the cyanobacterium Synechocystis PCC6803 reveal a unique distal heme pocket.</title>
        <authorList>
            <person name="Couture M."/>
            <person name="Das T.K."/>
            <person name="Savard P.Y."/>
            <person name="Ouellet Y."/>
            <person name="Wittenberg J.B."/>
            <person name="Wittenberg B.A."/>
            <person name="Rousseau D.L."/>
            <person name="Guertin M."/>
        </authorList>
    </citation>
    <scope>CHARACTERIZATION</scope>
    <scope>MUTAGENESIS OF HIS-46</scope>
</reference>
<reference key="3">
    <citation type="journal article" date="2000" name="Protein Sci.">
        <title>Cloning, expression, purification, and preliminary characterization of a putative hemoglobin from the cyanobacterium Synechocystis sp. PCC 6803.</title>
        <authorList>
            <person name="Scott N.L."/>
            <person name="Lecomte J.T.J."/>
        </authorList>
    </citation>
    <scope>CHARACTERIZATION</scope>
</reference>
<reference key="4">
    <citation type="journal article" date="2002" name="J. Am. Chem. Soc.">
        <title>Novel histidine-heme covalent linkage in a hemoglobin.</title>
        <authorList>
            <person name="Vu B.C."/>
            <person name="Jones A.D."/>
            <person name="Lecomte J.T.J."/>
        </authorList>
    </citation>
    <scope>COVALENT HEME ATTACHMENT</scope>
</reference>
<reference key="5">
    <citation type="journal article" date="2002" name="J. Mol. Biol.">
        <title>The solution structure of the recombinant hemoglobin from the cyanobacterium Synechocystis sp. PCC 6803 in its hemichrome state.</title>
        <authorList>
            <person name="Falzone C.J."/>
            <person name="Christie Vu B."/>
            <person name="Scott N.L."/>
            <person name="Lecomte J.T."/>
        </authorList>
    </citation>
    <scope>STRUCTURE BY NMR OF 2-124 IN THE LOW-SPIN FE(3+) STATE</scope>
</reference>
<reference key="6">
    <citation type="journal article" date="2004" name="J. Biol. Chem.">
        <title>The crystal structure of Synechocystis hemoglobin with a covalent heme linkage.</title>
        <authorList>
            <person name="Hoy J.A."/>
            <person name="Kundu S."/>
            <person name="Trent J.T. III"/>
            <person name="Ramaswamy S."/>
            <person name="Hargrove M.S."/>
        </authorList>
    </citation>
    <scope>X-RAY CRYSTALLOGRAPHY (1.8 ANGSTROMS) OF 2-124</scope>
    <scope>SUBUNIT</scope>
</reference>
<reference key="7">
    <citation type="journal article" date="2004" name="J. Mol. Biol.">
        <title>Crystallographic analysis of synechocystis cyanoglobin reveals the structural changes accompanying ligand binding in a hexacoordinate hemoglobin.</title>
        <authorList>
            <person name="Trent J.T. III"/>
            <person name="Kundu S."/>
            <person name="Hoy J.A."/>
            <person name="Hargrove M.S."/>
        </authorList>
    </citation>
    <scope>X-RAY CRYSTALLOGRAPHY (1.68 ANGSTROMS) IN CYANIDE AND AZIDE-BOUND FORMS</scope>
</reference>
<reference key="8">
    <citation type="journal article" date="2007" name="Protein Sci.">
        <title>Covalent heme attachment in Synechocystis hemoglobin is required to prevent ferrous heme dissociation.</title>
        <authorList>
            <person name="Hoy J.A."/>
            <person name="Smagghe B.J."/>
            <person name="Halder P."/>
            <person name="Hargrove M.S."/>
        </authorList>
    </citation>
    <scope>X-RAY CRYSTALLOGRAPHY (1.8 ANGSTROMS) OF 2-124 IN THE FE(2+) AND FE(3+) FORMS</scope>
    <scope>MUTAGENESIS OF HIS-117</scope>
</reference>
<comment type="function">
    <text>Forms a very stable complex with oxygen. The oxygen dissociation rate is 0.011 sec(-1).</text>
</comment>
<comment type="cofactor">
    <cofactor>
        <name>heme</name>
        <dbReference type="ChEBI" id="CHEBI:30413"/>
    </cofactor>
    <text>Binds 1 heme group per subunit.</text>
</comment>
<comment type="subunit">
    <text evidence="2">Monomer.</text>
</comment>
<comment type="similarity">
    <text evidence="4">Belongs to the truncated hemoglobin family. Group I subfamily.</text>
</comment>
<accession>P73925</accession>
<dbReference type="EMBL" id="BA000022">
    <property type="protein sequence ID" value="BAA17991.1"/>
    <property type="molecule type" value="Genomic_DNA"/>
</dbReference>
<dbReference type="PIR" id="S75129">
    <property type="entry name" value="S75129"/>
</dbReference>
<dbReference type="PDB" id="1MWB">
    <property type="method" value="NMR"/>
    <property type="chains" value="A=2-124"/>
</dbReference>
<dbReference type="PDB" id="1RTX">
    <property type="method" value="X-ray"/>
    <property type="resolution" value="1.80 A"/>
    <property type="chains" value="A=2-124"/>
</dbReference>
<dbReference type="PDB" id="1S69">
    <property type="method" value="X-ray"/>
    <property type="resolution" value="1.68 A"/>
    <property type="chains" value="A=1-124"/>
</dbReference>
<dbReference type="PDB" id="1S6A">
    <property type="method" value="X-ray"/>
    <property type="resolution" value="1.69 A"/>
    <property type="chains" value="A=1-124"/>
</dbReference>
<dbReference type="PDB" id="2HZ1">
    <property type="method" value="X-ray"/>
    <property type="resolution" value="1.80 A"/>
    <property type="chains" value="A=2-124"/>
</dbReference>
<dbReference type="PDB" id="2HZ2">
    <property type="method" value="X-ray"/>
    <property type="resolution" value="2.00 A"/>
    <property type="chains" value="A=2-124"/>
</dbReference>
<dbReference type="PDB" id="2HZ3">
    <property type="method" value="X-ray"/>
    <property type="resolution" value="1.90 A"/>
    <property type="chains" value="A=2-124"/>
</dbReference>
<dbReference type="PDBsum" id="1MWB"/>
<dbReference type="PDBsum" id="1RTX"/>
<dbReference type="PDBsum" id="1S69"/>
<dbReference type="PDBsum" id="1S6A"/>
<dbReference type="PDBsum" id="2HZ1"/>
<dbReference type="PDBsum" id="2HZ2"/>
<dbReference type="PDBsum" id="2HZ3"/>
<dbReference type="SMR" id="P73925"/>
<dbReference type="STRING" id="1148.gene:10498861"/>
<dbReference type="PaxDb" id="1148-1653074"/>
<dbReference type="EnsemblBacteria" id="BAA17991">
    <property type="protein sequence ID" value="BAA17991"/>
    <property type="gene ID" value="BAA17991"/>
</dbReference>
<dbReference type="KEGG" id="syn:slr2097"/>
<dbReference type="eggNOG" id="COG2346">
    <property type="taxonomic scope" value="Bacteria"/>
</dbReference>
<dbReference type="InParanoid" id="P73925"/>
<dbReference type="PhylomeDB" id="P73925"/>
<dbReference type="BioCyc" id="MetaCyc:MONOMER-19373"/>
<dbReference type="EvolutionaryTrace" id="P73925"/>
<dbReference type="Proteomes" id="UP000001425">
    <property type="component" value="Chromosome"/>
</dbReference>
<dbReference type="GO" id="GO:0005737">
    <property type="term" value="C:cytoplasm"/>
    <property type="evidence" value="ECO:0000318"/>
    <property type="project" value="GO_Central"/>
</dbReference>
<dbReference type="GO" id="GO:0020037">
    <property type="term" value="F:heme binding"/>
    <property type="evidence" value="ECO:0007669"/>
    <property type="project" value="InterPro"/>
</dbReference>
<dbReference type="GO" id="GO:0046872">
    <property type="term" value="F:metal ion binding"/>
    <property type="evidence" value="ECO:0007669"/>
    <property type="project" value="UniProtKB-KW"/>
</dbReference>
<dbReference type="GO" id="GO:0019825">
    <property type="term" value="F:oxygen binding"/>
    <property type="evidence" value="ECO:0007669"/>
    <property type="project" value="InterPro"/>
</dbReference>
<dbReference type="GO" id="GO:0005344">
    <property type="term" value="F:oxygen carrier activity"/>
    <property type="evidence" value="ECO:0007669"/>
    <property type="project" value="UniProtKB-KW"/>
</dbReference>
<dbReference type="GO" id="GO:0008379">
    <property type="term" value="F:thioredoxin peroxidase activity"/>
    <property type="evidence" value="ECO:0000318"/>
    <property type="project" value="GO_Central"/>
</dbReference>
<dbReference type="GO" id="GO:0045454">
    <property type="term" value="P:cell redox homeostasis"/>
    <property type="evidence" value="ECO:0000318"/>
    <property type="project" value="GO_Central"/>
</dbReference>
<dbReference type="GO" id="GO:0034599">
    <property type="term" value="P:cellular response to oxidative stress"/>
    <property type="evidence" value="ECO:0000318"/>
    <property type="project" value="GO_Central"/>
</dbReference>
<dbReference type="CDD" id="cd00454">
    <property type="entry name" value="TrHb1_N"/>
    <property type="match status" value="1"/>
</dbReference>
<dbReference type="Gene3D" id="1.10.490.10">
    <property type="entry name" value="Globins"/>
    <property type="match status" value="1"/>
</dbReference>
<dbReference type="InterPro" id="IPR009050">
    <property type="entry name" value="Globin-like_sf"/>
</dbReference>
<dbReference type="InterPro" id="IPR012292">
    <property type="entry name" value="Globin/Proto"/>
</dbReference>
<dbReference type="InterPro" id="IPR019795">
    <property type="entry name" value="Globin_bac-like_CS"/>
</dbReference>
<dbReference type="InterPro" id="IPR001486">
    <property type="entry name" value="Hemoglobin_trunc"/>
</dbReference>
<dbReference type="InterPro" id="IPR016339">
    <property type="entry name" value="Hemoglobin_trunc_I"/>
</dbReference>
<dbReference type="Pfam" id="PF01152">
    <property type="entry name" value="Bac_globin"/>
    <property type="match status" value="1"/>
</dbReference>
<dbReference type="PIRSF" id="PIRSF002030">
    <property type="entry name" value="Globin_Protozoa/Cyanobacteria"/>
    <property type="match status" value="1"/>
</dbReference>
<dbReference type="SUPFAM" id="SSF46458">
    <property type="entry name" value="Globin-like"/>
    <property type="match status" value="1"/>
</dbReference>
<dbReference type="PROSITE" id="PS01213">
    <property type="entry name" value="GLOBIN_FAM_2"/>
    <property type="match status" value="1"/>
</dbReference>
<name>TRHBN_SYNY3</name>
<gene>
    <name type="primary">glbN</name>
    <name type="ordered locus">slr2097</name>
</gene>
<protein>
    <recommendedName>
        <fullName>Group 1 truncated hemoglobin GlbN</fullName>
        <shortName>Truncated Hb</shortName>
        <shortName>trHbN</shortName>
    </recommendedName>
    <alternativeName>
        <fullName>Cyanoglobin</fullName>
    </alternativeName>
    <alternativeName>
        <fullName>Hemoglobin</fullName>
        <shortName>Hb</shortName>
    </alternativeName>
    <alternativeName>
        <fullName>SynHb</fullName>
    </alternativeName>
</protein>
<evidence type="ECO:0000269" key="1">
    <source>
    </source>
</evidence>
<evidence type="ECO:0000269" key="2">
    <source>
    </source>
</evidence>
<evidence type="ECO:0000269" key="3">
    <source>
    </source>
</evidence>
<evidence type="ECO:0000305" key="4"/>
<evidence type="ECO:0007829" key="5">
    <source>
        <dbReference type="PDB" id="1S69"/>
    </source>
</evidence>
<proteinExistence type="evidence at protein level"/>
<sequence>MSTLYEKLGGTTAVDLAVDKFYERVLQDDRIKHFFADVDMAKQRAHQKAFLTYAFGGTDKYDGRYMREAHKELVENHGLNGEHFDAVAEDLLATLKEMGVPEDLIAEVAAVAGAPAHKRDVLNQ</sequence>
<feature type="chain" id="PRO_0000162646" description="Group 1 truncated hemoglobin GlbN">
    <location>
        <begin position="1"/>
        <end position="124"/>
    </location>
</feature>
<feature type="binding site" description="distal binding residue">
    <location>
        <position position="46"/>
    </location>
    <ligand>
        <name>heme</name>
        <dbReference type="ChEBI" id="CHEBI:30413"/>
    </ligand>
    <ligandPart>
        <name>Fe</name>
        <dbReference type="ChEBI" id="CHEBI:18248"/>
    </ligandPart>
</feature>
<feature type="binding site" description="proximal binding residue">
    <location>
        <position position="70"/>
    </location>
    <ligand>
        <name>heme</name>
        <dbReference type="ChEBI" id="CHEBI:30413"/>
    </ligand>
    <ligandPart>
        <name>Fe</name>
        <dbReference type="ChEBI" id="CHEBI:18248"/>
    </ligandPart>
</feature>
<feature type="binding site" description="covalent">
    <location>
        <position position="117"/>
    </location>
    <ligand>
        <name>heme</name>
        <dbReference type="ChEBI" id="CHEBI:30413"/>
    </ligand>
</feature>
<feature type="mutagenesis site" description="Changes iron coordination." evidence="1">
    <original>H</original>
    <variation>A</variation>
    <location>
        <position position="46"/>
    </location>
</feature>
<feature type="mutagenesis site" description="Increases heme dissociation from the Fe(2+) hexacoordinate complex." evidence="3">
    <original>H</original>
    <variation>A</variation>
    <location>
        <position position="117"/>
    </location>
</feature>
<feature type="helix" evidence="5">
    <location>
        <begin position="4"/>
        <end position="8"/>
    </location>
</feature>
<feature type="helix" evidence="5">
    <location>
        <begin position="10"/>
        <end position="26"/>
    </location>
</feature>
<feature type="turn" evidence="5">
    <location>
        <begin position="29"/>
        <end position="31"/>
    </location>
</feature>
<feature type="helix" evidence="5">
    <location>
        <begin position="32"/>
        <end position="35"/>
    </location>
</feature>
<feature type="helix" evidence="5">
    <location>
        <begin position="40"/>
        <end position="54"/>
    </location>
</feature>
<feature type="strand" evidence="5">
    <location>
        <begin position="57"/>
        <end position="59"/>
    </location>
</feature>
<feature type="helix" evidence="5">
    <location>
        <begin position="66"/>
        <end position="77"/>
    </location>
</feature>
<feature type="helix" evidence="5">
    <location>
        <begin position="81"/>
        <end position="98"/>
    </location>
</feature>
<feature type="helix" evidence="5">
    <location>
        <begin position="102"/>
        <end position="113"/>
    </location>
</feature>
<feature type="helix" evidence="5">
    <location>
        <begin position="115"/>
        <end position="121"/>
    </location>
</feature>
<organism>
    <name type="scientific">Synechocystis sp. (strain ATCC 27184 / PCC 6803 / Kazusa)</name>
    <dbReference type="NCBI Taxonomy" id="1111708"/>
    <lineage>
        <taxon>Bacteria</taxon>
        <taxon>Bacillati</taxon>
        <taxon>Cyanobacteriota</taxon>
        <taxon>Cyanophyceae</taxon>
        <taxon>Synechococcales</taxon>
        <taxon>Merismopediaceae</taxon>
        <taxon>Synechocystis</taxon>
    </lineage>
</organism>